<comment type="function">
    <text evidence="3">Transcription factor that acts as a key regulator of spermatogenesis. Acts by regulating expression of genes required for the haploid phase during spermiogenesis, such as genes required for cilium assembly and function. Recognizes and binds the X-box, a regulatory motif with DNA sequence 5'-GTNRCC(0-3N)RGYAAC-3' present on promoters. Probably activates transcription of the testis-specific histone gene H1-6.</text>
</comment>
<comment type="subunit">
    <text evidence="3">Homodimer; probably only forms homodimers in testis. Heterodimer; heterodimerizes with RFX1 and RFX3.</text>
</comment>
<comment type="subcellular location">
    <subcellularLocation>
        <location evidence="1 4">Nucleus</location>
    </subcellularLocation>
    <subcellularLocation>
        <location evidence="1">Cytoplasm</location>
    </subcellularLocation>
    <text evidence="1">Mainly expressed in the nucleus and at lower level in cytoplasm.</text>
</comment>
<comment type="similarity">
    <text evidence="4">Belongs to the RFX family.</text>
</comment>
<reference key="1">
    <citation type="submission" date="2004-11" db="EMBL/GenBank/DDBJ databases">
        <authorList>
            <consortium name="The German cDNA consortium"/>
        </authorList>
    </citation>
    <scope>NUCLEOTIDE SEQUENCE [LARGE SCALE MRNA]</scope>
    <source>
        <tissue>Brain cortex</tissue>
    </source>
</reference>
<proteinExistence type="evidence at transcript level"/>
<sequence length="704" mass="77621">MQNSEGGADSPASVALRPSAAAPPVPASPQRVLVQAASSAPKGAQMQPISLPRVQQVPQQVQPVQHVYPAQVQYAEGGDAVYTNGAIRTAYTYNPEPQMYAPSSAASYFEAPGGAQVTVAASSPPAVPSHSMVGITMDVGGSPIVSSTGAYLIHGGMDSTRHSLAHTSRSSPATLEMAIENLQKSEGITSHKSGLLNSHLQWLLDNYETAEGVSLPRSSLYNHYLRHCQEHKLDPVNAASFGKLIRSVFMGLRTRRLGTRGNSKYHYYGIRLKPDSPLNRLQEDTQYMAMRQQPMHQKPRYRPAQKTDSLGDSSSHSGLHSTPEQTTAAQNQHHQQYIDVSHVFPEFPAPDLGSVLLQDGVTLHDVKALQLVYRRHCEATVDVVMNLQFHYIEKLWLSFWNSKASSSDGPTSLPASDEDPEGAVLPKDKLISLCQCDPILRWMRSCDHILYQALVEILIPDVLRPVPSTLTQAIRNFAKSLEGWLTNAMSDFPQQVIQTKVGVVSAFAQTLRRYTSLNHLAQAARAVLQNTSQINQMLSDLNRVDFANVQEQASWVCQCEESVVQRLEQDFKLTLQQQSSLDQWASWLDSVVTQVLKQHAGSPSFPKAARQFLLKWSFYSSMVIRDLTLRSAASFGSFHLIRLLYDEYMFYLVEHRVAEATGETPIAVMGERLSQNVTSALWPGSEPGSSPGELCSSAWLATLC</sequence>
<evidence type="ECO:0000250" key="1">
    <source>
        <dbReference type="UniProtKB" id="B2GV50"/>
    </source>
</evidence>
<evidence type="ECO:0000250" key="2">
    <source>
        <dbReference type="UniProtKB" id="P48378"/>
    </source>
</evidence>
<evidence type="ECO:0000250" key="3">
    <source>
        <dbReference type="UniProtKB" id="P48379"/>
    </source>
</evidence>
<evidence type="ECO:0000255" key="4">
    <source>
        <dbReference type="PROSITE-ProRule" id="PRU00858"/>
    </source>
</evidence>
<evidence type="ECO:0000256" key="5">
    <source>
        <dbReference type="SAM" id="MobiDB-lite"/>
    </source>
</evidence>
<gene>
    <name type="primary">RFX2</name>
</gene>
<name>RFX2_PONAB</name>
<feature type="chain" id="PRO_0000380695" description="DNA-binding protein RFX2">
    <location>
        <begin position="1"/>
        <end position="704"/>
    </location>
</feature>
<feature type="DNA-binding region" description="RFX-type winged-helix" evidence="4">
    <location>
        <begin position="199"/>
        <end position="274"/>
    </location>
</feature>
<feature type="region of interest" description="Disordered" evidence="5">
    <location>
        <begin position="1"/>
        <end position="39"/>
    </location>
</feature>
<feature type="region of interest" description="Disordered" evidence="5">
    <location>
        <begin position="292"/>
        <end position="334"/>
    </location>
</feature>
<feature type="compositionally biased region" description="Low complexity" evidence="5">
    <location>
        <begin position="10"/>
        <end position="20"/>
    </location>
</feature>
<feature type="compositionally biased region" description="Low complexity" evidence="5">
    <location>
        <begin position="307"/>
        <end position="334"/>
    </location>
</feature>
<feature type="modified residue" description="Phosphoserine" evidence="2">
    <location>
        <position position="28"/>
    </location>
</feature>
<feature type="modified residue" description="Phosphoserine" evidence="1">
    <location>
        <position position="416"/>
    </location>
</feature>
<dbReference type="EMBL" id="CR857840">
    <property type="protein sequence ID" value="CAH90095.1"/>
    <property type="molecule type" value="mRNA"/>
</dbReference>
<dbReference type="RefSeq" id="NP_001125003.1">
    <property type="nucleotide sequence ID" value="NM_001131531.1"/>
</dbReference>
<dbReference type="SMR" id="Q5RDR2"/>
<dbReference type="STRING" id="9601.ENSPPYP00000010591"/>
<dbReference type="GeneID" id="100171882"/>
<dbReference type="KEGG" id="pon:100171882"/>
<dbReference type="CTD" id="5990"/>
<dbReference type="eggNOG" id="KOG3712">
    <property type="taxonomic scope" value="Eukaryota"/>
</dbReference>
<dbReference type="InParanoid" id="Q5RDR2"/>
<dbReference type="OrthoDB" id="10056949at2759"/>
<dbReference type="Proteomes" id="UP000001595">
    <property type="component" value="Unplaced"/>
</dbReference>
<dbReference type="GO" id="GO:0005737">
    <property type="term" value="C:cytoplasm"/>
    <property type="evidence" value="ECO:0000250"/>
    <property type="project" value="UniProtKB"/>
</dbReference>
<dbReference type="GO" id="GO:0005634">
    <property type="term" value="C:nucleus"/>
    <property type="evidence" value="ECO:0000250"/>
    <property type="project" value="UniProtKB"/>
</dbReference>
<dbReference type="GO" id="GO:0003700">
    <property type="term" value="F:DNA-binding transcription factor activity"/>
    <property type="evidence" value="ECO:0000250"/>
    <property type="project" value="UniProtKB"/>
</dbReference>
<dbReference type="GO" id="GO:0000981">
    <property type="term" value="F:DNA-binding transcription factor activity, RNA polymerase II-specific"/>
    <property type="evidence" value="ECO:0007669"/>
    <property type="project" value="TreeGrafter"/>
</dbReference>
<dbReference type="GO" id="GO:0000978">
    <property type="term" value="F:RNA polymerase II cis-regulatory region sequence-specific DNA binding"/>
    <property type="evidence" value="ECO:0000250"/>
    <property type="project" value="UniProtKB"/>
</dbReference>
<dbReference type="GO" id="GO:0001675">
    <property type="term" value="P:acrosome assembly"/>
    <property type="evidence" value="ECO:0000250"/>
    <property type="project" value="UniProtKB"/>
</dbReference>
<dbReference type="GO" id="GO:0060271">
    <property type="term" value="P:cilium assembly"/>
    <property type="evidence" value="ECO:0000250"/>
    <property type="project" value="UniProtKB"/>
</dbReference>
<dbReference type="GO" id="GO:0006357">
    <property type="term" value="P:regulation of transcription by RNA polymerase II"/>
    <property type="evidence" value="ECO:0000250"/>
    <property type="project" value="UniProtKB"/>
</dbReference>
<dbReference type="GO" id="GO:0007286">
    <property type="term" value="P:spermatid development"/>
    <property type="evidence" value="ECO:0000250"/>
    <property type="project" value="UniProtKB"/>
</dbReference>
<dbReference type="FunFam" id="1.10.10.10:FF:000017">
    <property type="entry name" value="transcription factor RFX3 isoform X1"/>
    <property type="match status" value="1"/>
</dbReference>
<dbReference type="Gene3D" id="1.10.10.10">
    <property type="entry name" value="Winged helix-like DNA-binding domain superfamily/Winged helix DNA-binding domain"/>
    <property type="match status" value="1"/>
</dbReference>
<dbReference type="InterPro" id="IPR003150">
    <property type="entry name" value="DNA-bd_RFX"/>
</dbReference>
<dbReference type="InterPro" id="IPR039779">
    <property type="entry name" value="RFX-like"/>
</dbReference>
<dbReference type="InterPro" id="IPR007668">
    <property type="entry name" value="RFX1_trans_act"/>
</dbReference>
<dbReference type="InterPro" id="IPR036388">
    <property type="entry name" value="WH-like_DNA-bd_sf"/>
</dbReference>
<dbReference type="InterPro" id="IPR036390">
    <property type="entry name" value="WH_DNA-bd_sf"/>
</dbReference>
<dbReference type="PANTHER" id="PTHR12619:SF17">
    <property type="entry name" value="DNA-BINDING PROTEIN RFX2"/>
    <property type="match status" value="1"/>
</dbReference>
<dbReference type="PANTHER" id="PTHR12619">
    <property type="entry name" value="RFX TRANSCRIPTION FACTOR FAMILY"/>
    <property type="match status" value="1"/>
</dbReference>
<dbReference type="Pfam" id="PF25340">
    <property type="entry name" value="BCD_RFX"/>
    <property type="match status" value="1"/>
</dbReference>
<dbReference type="Pfam" id="PF04589">
    <property type="entry name" value="RFX1_trans_act"/>
    <property type="match status" value="1"/>
</dbReference>
<dbReference type="Pfam" id="PF02257">
    <property type="entry name" value="RFX_DNA_binding"/>
    <property type="match status" value="1"/>
</dbReference>
<dbReference type="SUPFAM" id="SSF46785">
    <property type="entry name" value="Winged helix' DNA-binding domain"/>
    <property type="match status" value="1"/>
</dbReference>
<dbReference type="PROSITE" id="PS51526">
    <property type="entry name" value="RFX_DBD"/>
    <property type="match status" value="1"/>
</dbReference>
<protein>
    <recommendedName>
        <fullName>DNA-binding protein RFX2</fullName>
    </recommendedName>
    <alternativeName>
        <fullName>Regulatory factor X 2</fullName>
    </alternativeName>
</protein>
<accession>Q5RDR2</accession>
<organism>
    <name type="scientific">Pongo abelii</name>
    <name type="common">Sumatran orangutan</name>
    <name type="synonym">Pongo pygmaeus abelii</name>
    <dbReference type="NCBI Taxonomy" id="9601"/>
    <lineage>
        <taxon>Eukaryota</taxon>
        <taxon>Metazoa</taxon>
        <taxon>Chordata</taxon>
        <taxon>Craniata</taxon>
        <taxon>Vertebrata</taxon>
        <taxon>Euteleostomi</taxon>
        <taxon>Mammalia</taxon>
        <taxon>Eutheria</taxon>
        <taxon>Euarchontoglires</taxon>
        <taxon>Primates</taxon>
        <taxon>Haplorrhini</taxon>
        <taxon>Catarrhini</taxon>
        <taxon>Hominidae</taxon>
        <taxon>Pongo</taxon>
    </lineage>
</organism>
<keyword id="KW-0970">Cilium biogenesis/degradation</keyword>
<keyword id="KW-0963">Cytoplasm</keyword>
<keyword id="KW-0221">Differentiation</keyword>
<keyword id="KW-0238">DNA-binding</keyword>
<keyword id="KW-0539">Nucleus</keyword>
<keyword id="KW-0597">Phosphoprotein</keyword>
<keyword id="KW-1185">Reference proteome</keyword>
<keyword id="KW-0744">Spermatogenesis</keyword>
<keyword id="KW-0804">Transcription</keyword>
<keyword id="KW-0805">Transcription regulation</keyword>